<gene>
    <name evidence="1" type="primary">rpsF</name>
    <name type="ordered locus">CJA_2982</name>
</gene>
<reference key="1">
    <citation type="journal article" date="2008" name="J. Bacteriol.">
        <title>Insights into plant cell wall degradation from the genome sequence of the soil bacterium Cellvibrio japonicus.</title>
        <authorList>
            <person name="DeBoy R.T."/>
            <person name="Mongodin E.F."/>
            <person name="Fouts D.E."/>
            <person name="Tailford L.E."/>
            <person name="Khouri H."/>
            <person name="Emerson J.B."/>
            <person name="Mohamoud Y."/>
            <person name="Watkins K."/>
            <person name="Henrissat B."/>
            <person name="Gilbert H.J."/>
            <person name="Nelson K.E."/>
        </authorList>
    </citation>
    <scope>NUCLEOTIDE SEQUENCE [LARGE SCALE GENOMIC DNA]</scope>
    <source>
        <strain>Ueda107</strain>
    </source>
</reference>
<feature type="chain" id="PRO_1000120722" description="Small ribosomal subunit protein bS6">
    <location>
        <begin position="1"/>
        <end position="147"/>
    </location>
</feature>
<feature type="region of interest" description="Disordered" evidence="2">
    <location>
        <begin position="107"/>
        <end position="147"/>
    </location>
</feature>
<feature type="compositionally biased region" description="Acidic residues" evidence="2">
    <location>
        <begin position="125"/>
        <end position="147"/>
    </location>
</feature>
<organism>
    <name type="scientific">Cellvibrio japonicus (strain Ueda107)</name>
    <name type="common">Pseudomonas fluorescens subsp. cellulosa</name>
    <dbReference type="NCBI Taxonomy" id="498211"/>
    <lineage>
        <taxon>Bacteria</taxon>
        <taxon>Pseudomonadati</taxon>
        <taxon>Pseudomonadota</taxon>
        <taxon>Gammaproteobacteria</taxon>
        <taxon>Cellvibrionales</taxon>
        <taxon>Cellvibrionaceae</taxon>
        <taxon>Cellvibrio</taxon>
    </lineage>
</organism>
<sequence length="147" mass="16950">MRHYEVVVLIHPDQSEQVPAMVERYTSTVKADGGQVHRFEDWGRRQLAYSINKVHKAHYVLLNVECSDAALEELTTNFRYNDAVLRSLVIREDAAITEESFILKAEKEGRERKARPARAERRDDTEAEDLSDEEGVEAEDFEEEQGV</sequence>
<protein>
    <recommendedName>
        <fullName evidence="1">Small ribosomal subunit protein bS6</fullName>
    </recommendedName>
    <alternativeName>
        <fullName evidence="3">30S ribosomal protein S6</fullName>
    </alternativeName>
</protein>
<name>RS6_CELJU</name>
<evidence type="ECO:0000255" key="1">
    <source>
        <dbReference type="HAMAP-Rule" id="MF_00360"/>
    </source>
</evidence>
<evidence type="ECO:0000256" key="2">
    <source>
        <dbReference type="SAM" id="MobiDB-lite"/>
    </source>
</evidence>
<evidence type="ECO:0000305" key="3"/>
<accession>B3PCS2</accession>
<dbReference type="EMBL" id="CP000934">
    <property type="protein sequence ID" value="ACE82770.1"/>
    <property type="molecule type" value="Genomic_DNA"/>
</dbReference>
<dbReference type="RefSeq" id="WP_012488563.1">
    <property type="nucleotide sequence ID" value="NC_010995.1"/>
</dbReference>
<dbReference type="SMR" id="B3PCS2"/>
<dbReference type="STRING" id="498211.CJA_2982"/>
<dbReference type="KEGG" id="cja:CJA_2982"/>
<dbReference type="eggNOG" id="COG0360">
    <property type="taxonomic scope" value="Bacteria"/>
</dbReference>
<dbReference type="HOGENOM" id="CLU_113441_6_1_6"/>
<dbReference type="OrthoDB" id="9812702at2"/>
<dbReference type="Proteomes" id="UP000001036">
    <property type="component" value="Chromosome"/>
</dbReference>
<dbReference type="GO" id="GO:0022627">
    <property type="term" value="C:cytosolic small ribosomal subunit"/>
    <property type="evidence" value="ECO:0007669"/>
    <property type="project" value="TreeGrafter"/>
</dbReference>
<dbReference type="GO" id="GO:0070181">
    <property type="term" value="F:small ribosomal subunit rRNA binding"/>
    <property type="evidence" value="ECO:0007669"/>
    <property type="project" value="TreeGrafter"/>
</dbReference>
<dbReference type="GO" id="GO:0003735">
    <property type="term" value="F:structural constituent of ribosome"/>
    <property type="evidence" value="ECO:0007669"/>
    <property type="project" value="InterPro"/>
</dbReference>
<dbReference type="GO" id="GO:0006412">
    <property type="term" value="P:translation"/>
    <property type="evidence" value="ECO:0007669"/>
    <property type="project" value="UniProtKB-UniRule"/>
</dbReference>
<dbReference type="CDD" id="cd00473">
    <property type="entry name" value="bS6"/>
    <property type="match status" value="1"/>
</dbReference>
<dbReference type="Gene3D" id="3.30.70.60">
    <property type="match status" value="1"/>
</dbReference>
<dbReference type="HAMAP" id="MF_00360">
    <property type="entry name" value="Ribosomal_bS6"/>
    <property type="match status" value="1"/>
</dbReference>
<dbReference type="InterPro" id="IPR000529">
    <property type="entry name" value="Ribosomal_bS6"/>
</dbReference>
<dbReference type="InterPro" id="IPR020815">
    <property type="entry name" value="Ribosomal_bS6_CS"/>
</dbReference>
<dbReference type="InterPro" id="IPR035980">
    <property type="entry name" value="Ribosomal_bS6_sf"/>
</dbReference>
<dbReference type="InterPro" id="IPR020814">
    <property type="entry name" value="Ribosomal_S6_plastid/chlpt"/>
</dbReference>
<dbReference type="InterPro" id="IPR014717">
    <property type="entry name" value="Transl_elong_EF1B/ribsomal_bS6"/>
</dbReference>
<dbReference type="NCBIfam" id="TIGR00166">
    <property type="entry name" value="S6"/>
    <property type="match status" value="1"/>
</dbReference>
<dbReference type="PANTHER" id="PTHR21011">
    <property type="entry name" value="MITOCHONDRIAL 28S RIBOSOMAL PROTEIN S6"/>
    <property type="match status" value="1"/>
</dbReference>
<dbReference type="PANTHER" id="PTHR21011:SF1">
    <property type="entry name" value="SMALL RIBOSOMAL SUBUNIT PROTEIN BS6M"/>
    <property type="match status" value="1"/>
</dbReference>
<dbReference type="Pfam" id="PF01250">
    <property type="entry name" value="Ribosomal_S6"/>
    <property type="match status" value="1"/>
</dbReference>
<dbReference type="SUPFAM" id="SSF54995">
    <property type="entry name" value="Ribosomal protein S6"/>
    <property type="match status" value="1"/>
</dbReference>
<dbReference type="PROSITE" id="PS01048">
    <property type="entry name" value="RIBOSOMAL_S6"/>
    <property type="match status" value="1"/>
</dbReference>
<keyword id="KW-1185">Reference proteome</keyword>
<keyword id="KW-0687">Ribonucleoprotein</keyword>
<keyword id="KW-0689">Ribosomal protein</keyword>
<keyword id="KW-0694">RNA-binding</keyword>
<keyword id="KW-0699">rRNA-binding</keyword>
<comment type="function">
    <text evidence="1">Binds together with bS18 to 16S ribosomal RNA.</text>
</comment>
<comment type="similarity">
    <text evidence="1">Belongs to the bacterial ribosomal protein bS6 family.</text>
</comment>
<proteinExistence type="inferred from homology"/>